<evidence type="ECO:0000255" key="1">
    <source>
        <dbReference type="HAMAP-Rule" id="MF_00226"/>
    </source>
</evidence>
<keyword id="KW-1185">Reference proteome</keyword>
<reference key="1">
    <citation type="journal article" date="2005" name="J. Bacteriol.">
        <title>The genome of Sulfolobus acidocaldarius, a model organism of the Crenarchaeota.</title>
        <authorList>
            <person name="Chen L."/>
            <person name="Bruegger K."/>
            <person name="Skovgaard M."/>
            <person name="Redder P."/>
            <person name="She Q."/>
            <person name="Torarinsson E."/>
            <person name="Greve B."/>
            <person name="Awayez M."/>
            <person name="Zibat A."/>
            <person name="Klenk H.-P."/>
            <person name="Garrett R.A."/>
        </authorList>
    </citation>
    <scope>NUCLEOTIDE SEQUENCE [LARGE SCALE GENOMIC DNA]</scope>
    <source>
        <strain>ATCC 33909 / DSM 639 / JCM 8929 / NBRC 15157 / NCIMB 11770</strain>
    </source>
</reference>
<comment type="similarity">
    <text evidence="1">Belongs to the CinA family.</text>
</comment>
<accession>Q4J8Q2</accession>
<proteinExistence type="inferred from homology"/>
<organism>
    <name type="scientific">Sulfolobus acidocaldarius (strain ATCC 33909 / DSM 639 / JCM 8929 / NBRC 15157 / NCIMB 11770)</name>
    <dbReference type="NCBI Taxonomy" id="330779"/>
    <lineage>
        <taxon>Archaea</taxon>
        <taxon>Thermoproteota</taxon>
        <taxon>Thermoprotei</taxon>
        <taxon>Sulfolobales</taxon>
        <taxon>Sulfolobaceae</taxon>
        <taxon>Sulfolobus</taxon>
    </lineage>
</organism>
<gene>
    <name type="ordered locus">Saci_1508</name>
</gene>
<protein>
    <recommendedName>
        <fullName evidence="1">Protein Saci_1508</fullName>
    </recommendedName>
</protein>
<name>Y1508_SULAC</name>
<sequence length="264" mass="29814">MENWYAEIITIGNEILSGKTINTNASHIARRILSLGYVVRRITTVMDDIEEISLVFKEAINRKPKLIISTGGLGPTYDDKTSEGLALALGVSFEINKDAYEMIVEKYKKRGLPLTEERVKMAKMPAGAAPVRNDEGIAPGIYILHKDIEILATPGVPREMENVLENFIKYHLKNRPNISYYENSFLLLGVMESTIAPYVKELVKKYNLYIKTHPRSKEMDKPELEVQVAGSSTDKEEITRIVNECINELKQIGTRLGGRVQEIM</sequence>
<feature type="chain" id="PRO_0000336541" description="Protein Saci_1508">
    <location>
        <begin position="1"/>
        <end position="264"/>
    </location>
</feature>
<dbReference type="EMBL" id="CP000077">
    <property type="protein sequence ID" value="AAY80829.1"/>
    <property type="molecule type" value="Genomic_DNA"/>
</dbReference>
<dbReference type="RefSeq" id="WP_011278331.1">
    <property type="nucleotide sequence ID" value="NC_007181.1"/>
</dbReference>
<dbReference type="SMR" id="Q4J8Q2"/>
<dbReference type="STRING" id="330779.Saci_1508"/>
<dbReference type="GeneID" id="14552006"/>
<dbReference type="KEGG" id="sai:Saci_1508"/>
<dbReference type="PATRIC" id="fig|330779.12.peg.1453"/>
<dbReference type="eggNOG" id="arCOG00215">
    <property type="taxonomic scope" value="Archaea"/>
</dbReference>
<dbReference type="HOGENOM" id="CLU_030805_0_5_2"/>
<dbReference type="Proteomes" id="UP000001018">
    <property type="component" value="Chromosome"/>
</dbReference>
<dbReference type="CDD" id="cd00885">
    <property type="entry name" value="cinA"/>
    <property type="match status" value="1"/>
</dbReference>
<dbReference type="Gene3D" id="3.40.980.10">
    <property type="entry name" value="MoaB/Mog-like domain"/>
    <property type="match status" value="1"/>
</dbReference>
<dbReference type="HAMAP" id="MF_00226_A">
    <property type="entry name" value="CinA_A"/>
    <property type="match status" value="1"/>
</dbReference>
<dbReference type="InterPro" id="IPR050101">
    <property type="entry name" value="CinA"/>
</dbReference>
<dbReference type="InterPro" id="IPR023055">
    <property type="entry name" value="CinA_Arc"/>
</dbReference>
<dbReference type="InterPro" id="IPR036425">
    <property type="entry name" value="MoaB/Mog-like_dom_sf"/>
</dbReference>
<dbReference type="InterPro" id="IPR001453">
    <property type="entry name" value="MoaB/Mog_dom"/>
</dbReference>
<dbReference type="NCBIfam" id="NF002291">
    <property type="entry name" value="PRK01215.1"/>
    <property type="match status" value="1"/>
</dbReference>
<dbReference type="PANTHER" id="PTHR13939">
    <property type="entry name" value="NICOTINAMIDE-NUCLEOTIDE AMIDOHYDROLASE PNCC"/>
    <property type="match status" value="1"/>
</dbReference>
<dbReference type="PANTHER" id="PTHR13939:SF0">
    <property type="entry name" value="NMN AMIDOHYDROLASE-LIKE PROTEIN YFAY"/>
    <property type="match status" value="1"/>
</dbReference>
<dbReference type="Pfam" id="PF00994">
    <property type="entry name" value="MoCF_biosynth"/>
    <property type="match status" value="1"/>
</dbReference>
<dbReference type="SMART" id="SM00852">
    <property type="entry name" value="MoCF_biosynth"/>
    <property type="match status" value="1"/>
</dbReference>
<dbReference type="SUPFAM" id="SSF53218">
    <property type="entry name" value="Molybdenum cofactor biosynthesis proteins"/>
    <property type="match status" value="1"/>
</dbReference>